<accession>B7VJT5</accession>
<keyword id="KW-0004">4Fe-4S</keyword>
<keyword id="KW-0963">Cytoplasm</keyword>
<keyword id="KW-1015">Disulfide bond</keyword>
<keyword id="KW-0408">Iron</keyword>
<keyword id="KW-0411">Iron-sulfur</keyword>
<keyword id="KW-0479">Metal-binding</keyword>
<keyword id="KW-0489">Methyltransferase</keyword>
<keyword id="KW-0698">rRNA processing</keyword>
<keyword id="KW-0949">S-adenosyl-L-methionine</keyword>
<keyword id="KW-0808">Transferase</keyword>
<keyword id="KW-0819">tRNA processing</keyword>
<name>RLMN_VIBA3</name>
<dbReference type="EC" id="2.1.1.192" evidence="1"/>
<dbReference type="EMBL" id="FM954972">
    <property type="protein sequence ID" value="CAV17609.1"/>
    <property type="molecule type" value="Genomic_DNA"/>
</dbReference>
<dbReference type="SMR" id="B7VJT5"/>
<dbReference type="STRING" id="575788.VS_0616"/>
<dbReference type="KEGG" id="vsp:VS_0616"/>
<dbReference type="eggNOG" id="COG0820">
    <property type="taxonomic scope" value="Bacteria"/>
</dbReference>
<dbReference type="HOGENOM" id="CLU_029101_0_0_6"/>
<dbReference type="Proteomes" id="UP000009100">
    <property type="component" value="Chromosome 1"/>
</dbReference>
<dbReference type="GO" id="GO:0005737">
    <property type="term" value="C:cytoplasm"/>
    <property type="evidence" value="ECO:0007669"/>
    <property type="project" value="UniProtKB-SubCell"/>
</dbReference>
<dbReference type="GO" id="GO:0051539">
    <property type="term" value="F:4 iron, 4 sulfur cluster binding"/>
    <property type="evidence" value="ECO:0007669"/>
    <property type="project" value="UniProtKB-UniRule"/>
</dbReference>
<dbReference type="GO" id="GO:0046872">
    <property type="term" value="F:metal ion binding"/>
    <property type="evidence" value="ECO:0007669"/>
    <property type="project" value="UniProtKB-KW"/>
</dbReference>
<dbReference type="GO" id="GO:0070040">
    <property type="term" value="F:rRNA (adenine(2503)-C2-)-methyltransferase activity"/>
    <property type="evidence" value="ECO:0007669"/>
    <property type="project" value="UniProtKB-UniRule"/>
</dbReference>
<dbReference type="GO" id="GO:0019843">
    <property type="term" value="F:rRNA binding"/>
    <property type="evidence" value="ECO:0007669"/>
    <property type="project" value="UniProtKB-UniRule"/>
</dbReference>
<dbReference type="GO" id="GO:0002935">
    <property type="term" value="F:tRNA (adenine(37)-C2)-methyltransferase activity"/>
    <property type="evidence" value="ECO:0007669"/>
    <property type="project" value="UniProtKB-UniRule"/>
</dbReference>
<dbReference type="GO" id="GO:0000049">
    <property type="term" value="F:tRNA binding"/>
    <property type="evidence" value="ECO:0007669"/>
    <property type="project" value="UniProtKB-UniRule"/>
</dbReference>
<dbReference type="GO" id="GO:0070475">
    <property type="term" value="P:rRNA base methylation"/>
    <property type="evidence" value="ECO:0007669"/>
    <property type="project" value="UniProtKB-UniRule"/>
</dbReference>
<dbReference type="GO" id="GO:0030488">
    <property type="term" value="P:tRNA methylation"/>
    <property type="evidence" value="ECO:0007669"/>
    <property type="project" value="UniProtKB-UniRule"/>
</dbReference>
<dbReference type="CDD" id="cd01335">
    <property type="entry name" value="Radical_SAM"/>
    <property type="match status" value="1"/>
</dbReference>
<dbReference type="FunFam" id="1.10.150.530:FF:000003">
    <property type="entry name" value="Dual-specificity RNA methyltransferase RlmN"/>
    <property type="match status" value="1"/>
</dbReference>
<dbReference type="FunFam" id="3.20.20.70:FF:000008">
    <property type="entry name" value="Dual-specificity RNA methyltransferase RlmN"/>
    <property type="match status" value="1"/>
</dbReference>
<dbReference type="Gene3D" id="1.10.150.530">
    <property type="match status" value="1"/>
</dbReference>
<dbReference type="Gene3D" id="3.20.20.70">
    <property type="entry name" value="Aldolase class I"/>
    <property type="match status" value="1"/>
</dbReference>
<dbReference type="HAMAP" id="MF_01849">
    <property type="entry name" value="RNA_methyltr_RlmN"/>
    <property type="match status" value="1"/>
</dbReference>
<dbReference type="InterPro" id="IPR013785">
    <property type="entry name" value="Aldolase_TIM"/>
</dbReference>
<dbReference type="InterPro" id="IPR006638">
    <property type="entry name" value="Elp3/MiaA/NifB-like_rSAM"/>
</dbReference>
<dbReference type="InterPro" id="IPR040072">
    <property type="entry name" value="Methyltransferase_A"/>
</dbReference>
<dbReference type="InterPro" id="IPR048641">
    <property type="entry name" value="RlmN_N"/>
</dbReference>
<dbReference type="InterPro" id="IPR027492">
    <property type="entry name" value="RNA_MTrfase_RlmN"/>
</dbReference>
<dbReference type="InterPro" id="IPR004383">
    <property type="entry name" value="rRNA_lsu_MTrfase_RlmN/Cfr"/>
</dbReference>
<dbReference type="InterPro" id="IPR007197">
    <property type="entry name" value="rSAM"/>
</dbReference>
<dbReference type="NCBIfam" id="NF008396">
    <property type="entry name" value="PRK11194.1"/>
    <property type="match status" value="1"/>
</dbReference>
<dbReference type="NCBIfam" id="TIGR00048">
    <property type="entry name" value="rRNA_mod_RlmN"/>
    <property type="match status" value="1"/>
</dbReference>
<dbReference type="PANTHER" id="PTHR30544">
    <property type="entry name" value="23S RRNA METHYLTRANSFERASE"/>
    <property type="match status" value="1"/>
</dbReference>
<dbReference type="PANTHER" id="PTHR30544:SF5">
    <property type="entry name" value="RADICAL SAM CORE DOMAIN-CONTAINING PROTEIN"/>
    <property type="match status" value="1"/>
</dbReference>
<dbReference type="Pfam" id="PF04055">
    <property type="entry name" value="Radical_SAM"/>
    <property type="match status" value="1"/>
</dbReference>
<dbReference type="Pfam" id="PF21016">
    <property type="entry name" value="RlmN_N"/>
    <property type="match status" value="1"/>
</dbReference>
<dbReference type="PIRSF" id="PIRSF006004">
    <property type="entry name" value="CHP00048"/>
    <property type="match status" value="1"/>
</dbReference>
<dbReference type="SFLD" id="SFLDF00275">
    <property type="entry name" value="adenosine_C2_methyltransferase"/>
    <property type="match status" value="1"/>
</dbReference>
<dbReference type="SFLD" id="SFLDG01062">
    <property type="entry name" value="methyltransferase_(Class_A)"/>
    <property type="match status" value="1"/>
</dbReference>
<dbReference type="SMART" id="SM00729">
    <property type="entry name" value="Elp3"/>
    <property type="match status" value="1"/>
</dbReference>
<dbReference type="SUPFAM" id="SSF102114">
    <property type="entry name" value="Radical SAM enzymes"/>
    <property type="match status" value="1"/>
</dbReference>
<dbReference type="PROSITE" id="PS51918">
    <property type="entry name" value="RADICAL_SAM"/>
    <property type="match status" value="1"/>
</dbReference>
<gene>
    <name evidence="1" type="primary">rlmN</name>
    <name type="ordered locus">VS_0616</name>
</gene>
<organism>
    <name type="scientific">Vibrio atlanticus (strain LGP32)</name>
    <name type="common">Vibrio splendidus (strain Mel32)</name>
    <dbReference type="NCBI Taxonomy" id="575788"/>
    <lineage>
        <taxon>Bacteria</taxon>
        <taxon>Pseudomonadati</taxon>
        <taxon>Pseudomonadota</taxon>
        <taxon>Gammaproteobacteria</taxon>
        <taxon>Vibrionales</taxon>
        <taxon>Vibrionaceae</taxon>
        <taxon>Vibrio</taxon>
    </lineage>
</organism>
<proteinExistence type="inferred from homology"/>
<evidence type="ECO:0000255" key="1">
    <source>
        <dbReference type="HAMAP-Rule" id="MF_01849"/>
    </source>
</evidence>
<evidence type="ECO:0000255" key="2">
    <source>
        <dbReference type="PROSITE-ProRule" id="PRU01266"/>
    </source>
</evidence>
<reference key="1">
    <citation type="submission" date="2009-02" db="EMBL/GenBank/DDBJ databases">
        <title>Vibrio splendidus str. LGP32 complete genome.</title>
        <authorList>
            <person name="Mazel D."/>
            <person name="Le Roux F."/>
        </authorList>
    </citation>
    <scope>NUCLEOTIDE SEQUENCE [LARGE SCALE GENOMIC DNA]</scope>
    <source>
        <strain>LGP32</strain>
    </source>
</reference>
<comment type="function">
    <text evidence="1">Specifically methylates position 2 of adenine 2503 in 23S rRNA and position 2 of adenine 37 in tRNAs. m2A2503 modification seems to play a crucial role in the proofreading step occurring at the peptidyl transferase center and thus would serve to optimize ribosomal fidelity.</text>
</comment>
<comment type="catalytic activity">
    <reaction evidence="1">
        <text>adenosine(2503) in 23S rRNA + 2 reduced [2Fe-2S]-[ferredoxin] + 2 S-adenosyl-L-methionine = 2-methyladenosine(2503) in 23S rRNA + 5'-deoxyadenosine + L-methionine + 2 oxidized [2Fe-2S]-[ferredoxin] + S-adenosyl-L-homocysteine</text>
        <dbReference type="Rhea" id="RHEA:42916"/>
        <dbReference type="Rhea" id="RHEA-COMP:10000"/>
        <dbReference type="Rhea" id="RHEA-COMP:10001"/>
        <dbReference type="Rhea" id="RHEA-COMP:10152"/>
        <dbReference type="Rhea" id="RHEA-COMP:10282"/>
        <dbReference type="ChEBI" id="CHEBI:17319"/>
        <dbReference type="ChEBI" id="CHEBI:33737"/>
        <dbReference type="ChEBI" id="CHEBI:33738"/>
        <dbReference type="ChEBI" id="CHEBI:57844"/>
        <dbReference type="ChEBI" id="CHEBI:57856"/>
        <dbReference type="ChEBI" id="CHEBI:59789"/>
        <dbReference type="ChEBI" id="CHEBI:74411"/>
        <dbReference type="ChEBI" id="CHEBI:74497"/>
        <dbReference type="EC" id="2.1.1.192"/>
    </reaction>
</comment>
<comment type="catalytic activity">
    <reaction evidence="1">
        <text>adenosine(37) in tRNA + 2 reduced [2Fe-2S]-[ferredoxin] + 2 S-adenosyl-L-methionine = 2-methyladenosine(37) in tRNA + 5'-deoxyadenosine + L-methionine + 2 oxidized [2Fe-2S]-[ferredoxin] + S-adenosyl-L-homocysteine</text>
        <dbReference type="Rhea" id="RHEA:43332"/>
        <dbReference type="Rhea" id="RHEA-COMP:10000"/>
        <dbReference type="Rhea" id="RHEA-COMP:10001"/>
        <dbReference type="Rhea" id="RHEA-COMP:10162"/>
        <dbReference type="Rhea" id="RHEA-COMP:10485"/>
        <dbReference type="ChEBI" id="CHEBI:17319"/>
        <dbReference type="ChEBI" id="CHEBI:33737"/>
        <dbReference type="ChEBI" id="CHEBI:33738"/>
        <dbReference type="ChEBI" id="CHEBI:57844"/>
        <dbReference type="ChEBI" id="CHEBI:57856"/>
        <dbReference type="ChEBI" id="CHEBI:59789"/>
        <dbReference type="ChEBI" id="CHEBI:74411"/>
        <dbReference type="ChEBI" id="CHEBI:74497"/>
        <dbReference type="EC" id="2.1.1.192"/>
    </reaction>
</comment>
<comment type="cofactor">
    <cofactor evidence="1">
        <name>[4Fe-4S] cluster</name>
        <dbReference type="ChEBI" id="CHEBI:49883"/>
    </cofactor>
    <text evidence="1">Binds 1 [4Fe-4S] cluster. The cluster is coordinated with 3 cysteines and an exchangeable S-adenosyl-L-methionine.</text>
</comment>
<comment type="subcellular location">
    <subcellularLocation>
        <location evidence="1">Cytoplasm</location>
    </subcellularLocation>
</comment>
<comment type="miscellaneous">
    <text evidence="1">Reaction proceeds by a ping-pong mechanism involving intermediate methylation of a conserved cysteine residue.</text>
</comment>
<comment type="similarity">
    <text evidence="1">Belongs to the radical SAM superfamily. RlmN family.</text>
</comment>
<protein>
    <recommendedName>
        <fullName evidence="1">Dual-specificity RNA methyltransferase RlmN</fullName>
        <ecNumber evidence="1">2.1.1.192</ecNumber>
    </recommendedName>
    <alternativeName>
        <fullName evidence="1">23S rRNA (adenine(2503)-C(2))-methyltransferase</fullName>
    </alternativeName>
    <alternativeName>
        <fullName evidence="1">23S rRNA m2A2503 methyltransferase</fullName>
    </alternativeName>
    <alternativeName>
        <fullName evidence="1">Ribosomal RNA large subunit methyltransferase N</fullName>
    </alternativeName>
    <alternativeName>
        <fullName evidence="1">tRNA (adenine(37)-C(2))-methyltransferase</fullName>
    </alternativeName>
    <alternativeName>
        <fullName evidence="1">tRNA m2A37 methyltransferase</fullName>
    </alternativeName>
</protein>
<feature type="chain" id="PRO_1000188619" description="Dual-specificity RNA methyltransferase RlmN">
    <location>
        <begin position="1"/>
        <end position="380"/>
    </location>
</feature>
<feature type="domain" description="Radical SAM core" evidence="2">
    <location>
        <begin position="100"/>
        <end position="339"/>
    </location>
</feature>
<feature type="active site" description="Proton acceptor" evidence="1">
    <location>
        <position position="94"/>
    </location>
</feature>
<feature type="active site" description="S-methylcysteine intermediate" evidence="1">
    <location>
        <position position="344"/>
    </location>
</feature>
<feature type="binding site" evidence="1">
    <location>
        <position position="114"/>
    </location>
    <ligand>
        <name>[4Fe-4S] cluster</name>
        <dbReference type="ChEBI" id="CHEBI:49883"/>
        <note>4Fe-4S-S-AdoMet</note>
    </ligand>
</feature>
<feature type="binding site" evidence="1">
    <location>
        <position position="118"/>
    </location>
    <ligand>
        <name>[4Fe-4S] cluster</name>
        <dbReference type="ChEBI" id="CHEBI:49883"/>
        <note>4Fe-4S-S-AdoMet</note>
    </ligand>
</feature>
<feature type="binding site" evidence="1">
    <location>
        <position position="121"/>
    </location>
    <ligand>
        <name>[4Fe-4S] cluster</name>
        <dbReference type="ChEBI" id="CHEBI:49883"/>
        <note>4Fe-4S-S-AdoMet</note>
    </ligand>
</feature>
<feature type="binding site" evidence="1">
    <location>
        <begin position="168"/>
        <end position="169"/>
    </location>
    <ligand>
        <name>S-adenosyl-L-methionine</name>
        <dbReference type="ChEBI" id="CHEBI:59789"/>
    </ligand>
</feature>
<feature type="binding site" evidence="1">
    <location>
        <position position="200"/>
    </location>
    <ligand>
        <name>S-adenosyl-L-methionine</name>
        <dbReference type="ChEBI" id="CHEBI:59789"/>
    </ligand>
</feature>
<feature type="binding site" evidence="1">
    <location>
        <begin position="222"/>
        <end position="224"/>
    </location>
    <ligand>
        <name>S-adenosyl-L-methionine</name>
        <dbReference type="ChEBI" id="CHEBI:59789"/>
    </ligand>
</feature>
<feature type="binding site" evidence="1">
    <location>
        <position position="301"/>
    </location>
    <ligand>
        <name>S-adenosyl-L-methionine</name>
        <dbReference type="ChEBI" id="CHEBI:59789"/>
    </ligand>
</feature>
<feature type="disulfide bond" description="(transient)" evidence="1">
    <location>
        <begin position="107"/>
        <end position="344"/>
    </location>
</feature>
<sequence length="380" mass="42722">MTTAKVNLLDFDRKGLRKFFTEELNEKAFRAEQVMKWIYHFGVDDFEQMNNINKKLREKLLHRCEIVAPIVSEAQHSADGTIKWAMSVGDQDVETVYIPDGDRATLCVSSQVGCALECKFCSTAQQGFNRNLKVSEIVGQIWRAAREIGLEKETGRRPITNVVMMGMGEPLLNMKNLIPSLELMLDDLGFSLSKRRVTVSTSGVVSGLDQMTDNIDVALAISLHAPNDALRSQIMPINDRWDIQDFLASVRRYIASSNANRGKVTVEYVLLDHVNDDMDHARELAELMKDTPCKINLIPFNPYPGSPYKKPSNSRIDRFQKTLMEYNYTVTVRKTRGDDIDAACGQLVGDVIDRTKRTKMLKAASEANLIAGDVIQVKAV</sequence>